<organism>
    <name type="scientific">Candida albicans (strain SC5314 / ATCC MYA-2876)</name>
    <name type="common">Yeast</name>
    <dbReference type="NCBI Taxonomy" id="237561"/>
    <lineage>
        <taxon>Eukaryota</taxon>
        <taxon>Fungi</taxon>
        <taxon>Dikarya</taxon>
        <taxon>Ascomycota</taxon>
        <taxon>Saccharomycotina</taxon>
        <taxon>Pichiomycetes</taxon>
        <taxon>Debaryomycetaceae</taxon>
        <taxon>Candida/Lodderomyces clade</taxon>
        <taxon>Candida</taxon>
    </lineage>
</organism>
<evidence type="ECO:0000250" key="1">
    <source>
        <dbReference type="UniProtKB" id="P0CX37"/>
    </source>
</evidence>
<evidence type="ECO:0000269" key="2">
    <source>
    </source>
</evidence>
<evidence type="ECO:0000303" key="3">
    <source>
    </source>
</evidence>
<evidence type="ECO:0000305" key="4"/>
<evidence type="ECO:0000305" key="5">
    <source>
    </source>
</evidence>
<evidence type="ECO:0007744" key="6">
    <source>
        <dbReference type="PDB" id="7PZY"/>
    </source>
</evidence>
<evidence type="ECO:0007744" key="7">
    <source>
        <dbReference type="PDB" id="7Q0F"/>
    </source>
</evidence>
<evidence type="ECO:0007744" key="8">
    <source>
        <dbReference type="PDB" id="7Q0P"/>
    </source>
</evidence>
<comment type="function">
    <text evidence="1 5">Component of the ribosome, a large ribonucleoprotein complex responsible for the synthesis of proteins in the cell. The small ribosomal subunit (SSU) binds messenger RNAs (mRNAs) and translates the encoded message by selecting cognate aminoacyl-transfer RNA (tRNA) molecules. The large subunit (LSU) contains the ribosomal catalytic site termed the peptidyl transferase center (PTC), which catalyzes the formation of peptide bonds, thereby polymerizing the amino acids delivered by tRNAs into a polypeptide chain. The nascent polypeptides leave the ribosome through a tunnel in the LSU and interact with protein factors that function in enzymatic processing, targeting, and the membrane insertion of nascent chains at the exit of the ribosomal tunnel (Probable). RPS6A is involved in nucleolar processing of pre-18S ribosomal RNA and ribosome assembly (By similarity).</text>
</comment>
<comment type="subunit">
    <text evidence="2">Component of the small ribosomal subunit (PubMed:35613268). Mature ribosomes consist of a small (40S) and a large (60S) subunit (PubMed:35613268). The 40S subunit contains about 32 different proteins and 1 molecule of RNA (18S) (PubMed:35613268). The 60S subunit contains 45 different proteins and 3 molecules of RNA (25S, 5.8S and 5S) (PubMed:35613268).</text>
</comment>
<comment type="subcellular location">
    <subcellularLocation>
        <location evidence="5">Cytoplasm</location>
    </subcellularLocation>
</comment>
<comment type="similarity">
    <text evidence="4">Belongs to the eukaryotic ribosomal protein eS6 family.</text>
</comment>
<dbReference type="EMBL" id="CP017626">
    <property type="protein sequence ID" value="AOW28911.1"/>
    <property type="molecule type" value="Genomic_DNA"/>
</dbReference>
<dbReference type="RefSeq" id="XP_019330905.1">
    <property type="nucleotide sequence ID" value="XM_019475360.1"/>
</dbReference>
<dbReference type="PDB" id="7PZY">
    <property type="method" value="EM"/>
    <property type="resolution" value="2.32 A"/>
    <property type="chains" value="H=1-236"/>
</dbReference>
<dbReference type="PDB" id="7Q08">
    <property type="method" value="EM"/>
    <property type="resolution" value="2.56 A"/>
    <property type="chains" value="H=1-236"/>
</dbReference>
<dbReference type="PDB" id="7Q0F">
    <property type="method" value="EM"/>
    <property type="resolution" value="2.64 A"/>
    <property type="chains" value="H=1-236"/>
</dbReference>
<dbReference type="PDB" id="7Q0P">
    <property type="method" value="EM"/>
    <property type="resolution" value="2.77 A"/>
    <property type="chains" value="H=1-236"/>
</dbReference>
<dbReference type="PDB" id="7Q0R">
    <property type="method" value="EM"/>
    <property type="resolution" value="2.67 A"/>
    <property type="chains" value="H=1-236"/>
</dbReference>
<dbReference type="PDB" id="8C3A">
    <property type="method" value="X-ray"/>
    <property type="resolution" value="3.00 A"/>
    <property type="chains" value="CT/I=1-236"/>
</dbReference>
<dbReference type="PDB" id="8OGJ">
    <property type="method" value="EM"/>
    <property type="resolution" value="3.10 A"/>
    <property type="chains" value="H=1-236"/>
</dbReference>
<dbReference type="PDB" id="8OH6">
    <property type="method" value="X-ray"/>
    <property type="resolution" value="3.35 A"/>
    <property type="chains" value="CT/I=1-236"/>
</dbReference>
<dbReference type="PDB" id="8OI5">
    <property type="method" value="X-ray"/>
    <property type="resolution" value="2.90 A"/>
    <property type="chains" value="CT/I=1-236"/>
</dbReference>
<dbReference type="PDB" id="8OJ3">
    <property type="method" value="X-ray"/>
    <property type="resolution" value="3.50 A"/>
    <property type="chains" value="CT/I=1-236"/>
</dbReference>
<dbReference type="PDBsum" id="7PZY"/>
<dbReference type="PDBsum" id="7Q08"/>
<dbReference type="PDBsum" id="7Q0F"/>
<dbReference type="PDBsum" id="7Q0P"/>
<dbReference type="PDBsum" id="7Q0R"/>
<dbReference type="PDBsum" id="8C3A"/>
<dbReference type="PDBsum" id="8OGJ"/>
<dbReference type="PDBsum" id="8OH6"/>
<dbReference type="PDBsum" id="8OI5"/>
<dbReference type="PDBsum" id="8OJ3"/>
<dbReference type="EMDB" id="EMD-13737"/>
<dbReference type="EMDB" id="EMD-13741"/>
<dbReference type="EMDB" id="EMD-13744"/>
<dbReference type="EMDB" id="EMD-13749"/>
<dbReference type="EMDB" id="EMD-13750"/>
<dbReference type="SMR" id="A0A1D8PL99"/>
<dbReference type="FunCoup" id="A0A1D8PL99">
    <property type="interactions" value="1179"/>
</dbReference>
<dbReference type="STRING" id="237561.A0A1D8PL99"/>
<dbReference type="EnsemblFungi" id="C4_01270W_A-T">
    <property type="protein sequence ID" value="C4_01270W_A-T-p1"/>
    <property type="gene ID" value="C4_01270W_A"/>
</dbReference>
<dbReference type="GeneID" id="3635701"/>
<dbReference type="KEGG" id="cal:CAALFM_C401270WA"/>
<dbReference type="CGD" id="CAL0000181351">
    <property type="gene designation" value="RPS6A"/>
</dbReference>
<dbReference type="VEuPathDB" id="FungiDB:C4_01270W_A"/>
<dbReference type="eggNOG" id="KOG1646">
    <property type="taxonomic scope" value="Eukaryota"/>
</dbReference>
<dbReference type="InParanoid" id="A0A1D8PL99"/>
<dbReference type="OMA" id="KPRYKAP"/>
<dbReference type="OrthoDB" id="10260596at2759"/>
<dbReference type="Proteomes" id="UP000000559">
    <property type="component" value="Chromosome 4"/>
</dbReference>
<dbReference type="GO" id="GO:0009986">
    <property type="term" value="C:cell surface"/>
    <property type="evidence" value="ECO:0000314"/>
    <property type="project" value="CGD"/>
</dbReference>
<dbReference type="GO" id="GO:0005737">
    <property type="term" value="C:cytoplasm"/>
    <property type="evidence" value="ECO:0007669"/>
    <property type="project" value="UniProtKB-SubCell"/>
</dbReference>
<dbReference type="GO" id="GO:1990904">
    <property type="term" value="C:ribonucleoprotein complex"/>
    <property type="evidence" value="ECO:0007669"/>
    <property type="project" value="UniProtKB-KW"/>
</dbReference>
<dbReference type="GO" id="GO:0005840">
    <property type="term" value="C:ribosome"/>
    <property type="evidence" value="ECO:0007669"/>
    <property type="project" value="UniProtKB-KW"/>
</dbReference>
<dbReference type="GO" id="GO:0030445">
    <property type="term" value="C:yeast-form cell wall"/>
    <property type="evidence" value="ECO:0000314"/>
    <property type="project" value="CGD"/>
</dbReference>
<dbReference type="GO" id="GO:0003735">
    <property type="term" value="F:structural constituent of ribosome"/>
    <property type="evidence" value="ECO:0007669"/>
    <property type="project" value="InterPro"/>
</dbReference>
<dbReference type="GO" id="GO:0006412">
    <property type="term" value="P:translation"/>
    <property type="evidence" value="ECO:0007669"/>
    <property type="project" value="InterPro"/>
</dbReference>
<dbReference type="FunFam" id="1.20.5.2650:FF:000001">
    <property type="entry name" value="40S ribosomal protein S6"/>
    <property type="match status" value="1"/>
</dbReference>
<dbReference type="Gene3D" id="1.20.5.2650">
    <property type="match status" value="1"/>
</dbReference>
<dbReference type="InterPro" id="IPR001377">
    <property type="entry name" value="Ribosomal_eS6"/>
</dbReference>
<dbReference type="InterPro" id="IPR014401">
    <property type="entry name" value="Ribosomal_eS6-like"/>
</dbReference>
<dbReference type="InterPro" id="IPR018282">
    <property type="entry name" value="Ribosomal_eS6_CS"/>
</dbReference>
<dbReference type="PANTHER" id="PTHR11502">
    <property type="entry name" value="40S RIBOSOMAL PROTEIN S6"/>
    <property type="match status" value="1"/>
</dbReference>
<dbReference type="Pfam" id="PF01092">
    <property type="entry name" value="Ribosomal_S6e"/>
    <property type="match status" value="1"/>
</dbReference>
<dbReference type="PIRSF" id="PIRSF002129">
    <property type="entry name" value="Ribosom_S6_euk"/>
    <property type="match status" value="1"/>
</dbReference>
<dbReference type="SMART" id="SM01405">
    <property type="entry name" value="Ribosomal_S6e"/>
    <property type="match status" value="1"/>
</dbReference>
<dbReference type="PROSITE" id="PS00578">
    <property type="entry name" value="RIBOSOMAL_S6E"/>
    <property type="match status" value="1"/>
</dbReference>
<feature type="chain" id="PRO_0000456544" description="Small ribosomal subunit protein eS6">
    <location>
        <begin position="1"/>
        <end position="236"/>
    </location>
</feature>
<accession>A0A1D8PL99</accession>
<sequence length="236" mass="27086">MKLNISYPANGTQKSIDIDDEHKLRVFYEKRMGQEVEGDSVGDEFKGYIFKITGGNDKQGFPMKQGVMHPTRVRLLLSKGHSCYRPRRTGERKRKSVRGCIVAQDLSVLALSIVKQGDNEIEGLTDTTVPKRLGPKRANHIRKFFGLTKEDDVRDFVVRREVTKGDKTYTKAPKIQRLVTPQTLQRKRALKAKKVKNAQQQRDAAAEYAQLLAKRLHERKEERAEIKKKRAESLKN</sequence>
<proteinExistence type="evidence at protein level"/>
<gene>
    <name type="primary">RPS6A</name>
    <name type="ordered locus">orf19.4660</name>
    <name type="ORF">CAALFM_C401270WA</name>
</gene>
<reference key="1">
    <citation type="journal article" date="2004" name="Proc. Natl. Acad. Sci. U.S.A.">
        <title>The diploid genome sequence of Candida albicans.</title>
        <authorList>
            <person name="Jones T."/>
            <person name="Federspiel N.A."/>
            <person name="Chibana H."/>
            <person name="Dungan J."/>
            <person name="Kalman S."/>
            <person name="Magee B.B."/>
            <person name="Newport G."/>
            <person name="Thorstenson Y.R."/>
            <person name="Agabian N."/>
            <person name="Magee P.T."/>
            <person name="Davis R.W."/>
            <person name="Scherer S."/>
        </authorList>
    </citation>
    <scope>NUCLEOTIDE SEQUENCE [LARGE SCALE GENOMIC DNA]</scope>
    <source>
        <strain>SC5314 / ATCC MYA-2876</strain>
    </source>
</reference>
<reference key="2">
    <citation type="journal article" date="2007" name="Genome Biol.">
        <title>Assembly of the Candida albicans genome into sixteen supercontigs aligned on the eight chromosomes.</title>
        <authorList>
            <person name="van het Hoog M."/>
            <person name="Rast T.J."/>
            <person name="Martchenko M."/>
            <person name="Grindle S."/>
            <person name="Dignard D."/>
            <person name="Hogues H."/>
            <person name="Cuomo C."/>
            <person name="Berriman M."/>
            <person name="Scherer S."/>
            <person name="Magee B.B."/>
            <person name="Whiteway M."/>
            <person name="Chibana H."/>
            <person name="Nantel A."/>
            <person name="Magee P.T."/>
        </authorList>
    </citation>
    <scope>GENOME REANNOTATION</scope>
    <source>
        <strain>SC5314 / ATCC MYA-2876</strain>
    </source>
</reference>
<reference key="3">
    <citation type="journal article" date="2013" name="Genome Biol.">
        <title>Assembly of a phased diploid Candida albicans genome facilitates allele-specific measurements and provides a simple model for repeat and indel structure.</title>
        <authorList>
            <person name="Muzzey D."/>
            <person name="Schwartz K."/>
            <person name="Weissman J.S."/>
            <person name="Sherlock G."/>
        </authorList>
    </citation>
    <scope>NUCLEOTIDE SEQUENCE [LARGE SCALE GENOMIC DNA]</scope>
    <scope>GENOME REANNOTATION</scope>
    <source>
        <strain>SC5314 / ATCC MYA-2876</strain>
    </source>
</reference>
<reference evidence="6 7 8" key="4">
    <citation type="journal article" date="2022" name="Sci. Adv.">
        <title>E-site drug specificity of the human pathogen Candida albicans ribosome.</title>
        <authorList>
            <person name="Zgadzay Y."/>
            <person name="Kolosova O."/>
            <person name="Stetsenko A."/>
            <person name="Wu C."/>
            <person name="Bruchlen D."/>
            <person name="Usachev K."/>
            <person name="Validov S."/>
            <person name="Jenner L."/>
            <person name="Rogachev A."/>
            <person name="Yusupova G."/>
            <person name="Sachs M.S."/>
            <person name="Guskov A."/>
            <person name="Yusupov M."/>
        </authorList>
    </citation>
    <scope>STRUCTURE BY ELECTRON MICROSCOPY (2.32 ANGSTROMS) OF THE 80S RIBOSOME</scope>
    <scope>SUBUNIT</scope>
</reference>
<name>RS6A_CANAL</name>
<keyword id="KW-0002">3D-structure</keyword>
<keyword id="KW-0963">Cytoplasm</keyword>
<keyword id="KW-1185">Reference proteome</keyword>
<keyword id="KW-0687">Ribonucleoprotein</keyword>
<keyword id="KW-0689">Ribosomal protein</keyword>
<protein>
    <recommendedName>
        <fullName evidence="3">Small ribosomal subunit protein eS6</fullName>
    </recommendedName>
    <alternativeName>
        <fullName>40S ribosomal protein S6</fullName>
    </alternativeName>
</protein>